<evidence type="ECO:0000255" key="1">
    <source>
        <dbReference type="HAMAP-Rule" id="MF_03101"/>
    </source>
</evidence>
<proteinExistence type="inferred from homology"/>
<comment type="function">
    <text evidence="1">Catalyzes the hydroxylation of the N(6)-(4-aminobutyl)-L-lysine intermediate to form hypusine, an essential post-translational modification only found in mature eIF-5A factor.</text>
</comment>
<comment type="catalytic activity">
    <reaction evidence="1">
        <text>[eIF5A protein]-deoxyhypusine + AH2 + O2 = [eIF5A protein]-hypusine + A + H2O</text>
        <dbReference type="Rhea" id="RHEA:14101"/>
        <dbReference type="Rhea" id="RHEA-COMP:10144"/>
        <dbReference type="Rhea" id="RHEA-COMP:12592"/>
        <dbReference type="ChEBI" id="CHEBI:13193"/>
        <dbReference type="ChEBI" id="CHEBI:15377"/>
        <dbReference type="ChEBI" id="CHEBI:15379"/>
        <dbReference type="ChEBI" id="CHEBI:17499"/>
        <dbReference type="ChEBI" id="CHEBI:82657"/>
        <dbReference type="ChEBI" id="CHEBI:91175"/>
        <dbReference type="EC" id="1.14.99.29"/>
    </reaction>
</comment>
<comment type="cofactor">
    <cofactor evidence="1">
        <name>Fe(2+)</name>
        <dbReference type="ChEBI" id="CHEBI:29033"/>
    </cofactor>
    <text evidence="1">Binds 2 Fe(2+) ions per subunit.</text>
</comment>
<comment type="pathway">
    <text evidence="1">Protein modification; eIF5A hypusination.</text>
</comment>
<comment type="subcellular location">
    <subcellularLocation>
        <location evidence="1">Cytoplasm</location>
    </subcellularLocation>
    <subcellularLocation>
        <location evidence="1">Nucleus</location>
    </subcellularLocation>
</comment>
<comment type="similarity">
    <text evidence="1">Belongs to the deoxyhypusine hydroxylase family.</text>
</comment>
<feature type="chain" id="PRO_0000283667" description="Deoxyhypusine hydroxylase">
    <location>
        <begin position="1"/>
        <end position="322"/>
    </location>
</feature>
<feature type="repeat" description="HEAT-like PBS-type 1">
    <location>
        <begin position="76"/>
        <end position="102"/>
    </location>
</feature>
<feature type="repeat" description="HEAT-like PBS-type 2">
    <location>
        <begin position="109"/>
        <end position="135"/>
    </location>
</feature>
<feature type="repeat" description="HEAT-like PBS-type 3">
    <location>
        <begin position="267"/>
        <end position="293"/>
    </location>
</feature>
<feature type="binding site" evidence="1">
    <location>
        <position position="78"/>
    </location>
    <ligand>
        <name>Fe cation</name>
        <dbReference type="ChEBI" id="CHEBI:24875"/>
        <label>1</label>
    </ligand>
</feature>
<feature type="binding site" evidence="1">
    <location>
        <position position="79"/>
    </location>
    <ligand>
        <name>Fe cation</name>
        <dbReference type="ChEBI" id="CHEBI:24875"/>
        <label>1</label>
    </ligand>
</feature>
<feature type="binding site" evidence="1">
    <location>
        <position position="111"/>
    </location>
    <ligand>
        <name>Fe cation</name>
        <dbReference type="ChEBI" id="CHEBI:24875"/>
        <label>1</label>
    </ligand>
</feature>
<feature type="binding site" evidence="1">
    <location>
        <position position="112"/>
    </location>
    <ligand>
        <name>Fe cation</name>
        <dbReference type="ChEBI" id="CHEBI:24875"/>
        <label>1</label>
    </ligand>
</feature>
<feature type="binding site" evidence="1">
    <location>
        <position position="236"/>
    </location>
    <ligand>
        <name>Fe cation</name>
        <dbReference type="ChEBI" id="CHEBI:24875"/>
        <label>2</label>
    </ligand>
</feature>
<feature type="binding site" evidence="1">
    <location>
        <position position="237"/>
    </location>
    <ligand>
        <name>Fe cation</name>
        <dbReference type="ChEBI" id="CHEBI:24875"/>
        <label>2</label>
    </ligand>
</feature>
<feature type="binding site" evidence="1">
    <location>
        <position position="269"/>
    </location>
    <ligand>
        <name>Fe cation</name>
        <dbReference type="ChEBI" id="CHEBI:24875"/>
        <label>2</label>
    </ligand>
</feature>
<feature type="binding site" evidence="1">
    <location>
        <position position="270"/>
    </location>
    <ligand>
        <name>Fe cation</name>
        <dbReference type="ChEBI" id="CHEBI:24875"/>
        <label>2</label>
    </ligand>
</feature>
<keyword id="KW-0963">Cytoplasm</keyword>
<keyword id="KW-0386">Hypusine biosynthesis</keyword>
<keyword id="KW-0408">Iron</keyword>
<keyword id="KW-0479">Metal-binding</keyword>
<keyword id="KW-0503">Monooxygenase</keyword>
<keyword id="KW-0539">Nucleus</keyword>
<keyword id="KW-0560">Oxidoreductase</keyword>
<keyword id="KW-1185">Reference proteome</keyword>
<keyword id="KW-0677">Repeat</keyword>
<gene>
    <name evidence="1" type="primary">LIA1</name>
    <name type="ordered locus">KLLA0B14080g</name>
</gene>
<reference key="1">
    <citation type="journal article" date="2004" name="Nature">
        <title>Genome evolution in yeasts.</title>
        <authorList>
            <person name="Dujon B."/>
            <person name="Sherman D."/>
            <person name="Fischer G."/>
            <person name="Durrens P."/>
            <person name="Casaregola S."/>
            <person name="Lafontaine I."/>
            <person name="de Montigny J."/>
            <person name="Marck C."/>
            <person name="Neuveglise C."/>
            <person name="Talla E."/>
            <person name="Goffard N."/>
            <person name="Frangeul L."/>
            <person name="Aigle M."/>
            <person name="Anthouard V."/>
            <person name="Babour A."/>
            <person name="Barbe V."/>
            <person name="Barnay S."/>
            <person name="Blanchin S."/>
            <person name="Beckerich J.-M."/>
            <person name="Beyne E."/>
            <person name="Bleykasten C."/>
            <person name="Boisrame A."/>
            <person name="Boyer J."/>
            <person name="Cattolico L."/>
            <person name="Confanioleri F."/>
            <person name="de Daruvar A."/>
            <person name="Despons L."/>
            <person name="Fabre E."/>
            <person name="Fairhead C."/>
            <person name="Ferry-Dumazet H."/>
            <person name="Groppi A."/>
            <person name="Hantraye F."/>
            <person name="Hennequin C."/>
            <person name="Jauniaux N."/>
            <person name="Joyet P."/>
            <person name="Kachouri R."/>
            <person name="Kerrest A."/>
            <person name="Koszul R."/>
            <person name="Lemaire M."/>
            <person name="Lesur I."/>
            <person name="Ma L."/>
            <person name="Muller H."/>
            <person name="Nicaud J.-M."/>
            <person name="Nikolski M."/>
            <person name="Oztas S."/>
            <person name="Ozier-Kalogeropoulos O."/>
            <person name="Pellenz S."/>
            <person name="Potier S."/>
            <person name="Richard G.-F."/>
            <person name="Straub M.-L."/>
            <person name="Suleau A."/>
            <person name="Swennen D."/>
            <person name="Tekaia F."/>
            <person name="Wesolowski-Louvel M."/>
            <person name="Westhof E."/>
            <person name="Wirth B."/>
            <person name="Zeniou-Meyer M."/>
            <person name="Zivanovic Y."/>
            <person name="Bolotin-Fukuhara M."/>
            <person name="Thierry A."/>
            <person name="Bouchier C."/>
            <person name="Caudron B."/>
            <person name="Scarpelli C."/>
            <person name="Gaillardin C."/>
            <person name="Weissenbach J."/>
            <person name="Wincker P."/>
            <person name="Souciet J.-L."/>
        </authorList>
    </citation>
    <scope>NUCLEOTIDE SEQUENCE [LARGE SCALE GENOMIC DNA]</scope>
    <source>
        <strain>ATCC 8585 / CBS 2359 / DSM 70799 / NBRC 1267 / NRRL Y-1140 / WM37</strain>
    </source>
</reference>
<dbReference type="EC" id="1.14.99.29" evidence="1"/>
<dbReference type="EMBL" id="CR382122">
    <property type="protein sequence ID" value="CAH02551.1"/>
    <property type="molecule type" value="Genomic_DNA"/>
</dbReference>
<dbReference type="RefSeq" id="XP_452158.1">
    <property type="nucleotide sequence ID" value="XM_452158.1"/>
</dbReference>
<dbReference type="SMR" id="Q6CV81"/>
<dbReference type="FunCoup" id="Q6CV81">
    <property type="interactions" value="952"/>
</dbReference>
<dbReference type="STRING" id="284590.Q6CV81"/>
<dbReference type="PaxDb" id="284590-Q6CV81"/>
<dbReference type="KEGG" id="kla:KLLA0_B14080g"/>
<dbReference type="eggNOG" id="KOG0567">
    <property type="taxonomic scope" value="Eukaryota"/>
</dbReference>
<dbReference type="HOGENOM" id="CLU_053974_0_0_1"/>
<dbReference type="InParanoid" id="Q6CV81"/>
<dbReference type="OMA" id="LQEPCSI"/>
<dbReference type="UniPathway" id="UPA00354"/>
<dbReference type="Proteomes" id="UP000000598">
    <property type="component" value="Chromosome B"/>
</dbReference>
<dbReference type="GO" id="GO:0005737">
    <property type="term" value="C:cytoplasm"/>
    <property type="evidence" value="ECO:0007669"/>
    <property type="project" value="UniProtKB-SubCell"/>
</dbReference>
<dbReference type="GO" id="GO:0005634">
    <property type="term" value="C:nucleus"/>
    <property type="evidence" value="ECO:0007669"/>
    <property type="project" value="UniProtKB-SubCell"/>
</dbReference>
<dbReference type="GO" id="GO:0019135">
    <property type="term" value="F:deoxyhypusine monooxygenase activity"/>
    <property type="evidence" value="ECO:0007669"/>
    <property type="project" value="UniProtKB-UniRule"/>
</dbReference>
<dbReference type="GO" id="GO:0046872">
    <property type="term" value="F:metal ion binding"/>
    <property type="evidence" value="ECO:0007669"/>
    <property type="project" value="UniProtKB-KW"/>
</dbReference>
<dbReference type="FunFam" id="1.25.10.10:FF:000099">
    <property type="entry name" value="Deoxyhypusine hydroxylase"/>
    <property type="match status" value="1"/>
</dbReference>
<dbReference type="Gene3D" id="1.25.10.10">
    <property type="entry name" value="Leucine-rich Repeat Variant"/>
    <property type="match status" value="2"/>
</dbReference>
<dbReference type="HAMAP" id="MF_03101">
    <property type="entry name" value="Deoxyhypusine_hydroxylase"/>
    <property type="match status" value="1"/>
</dbReference>
<dbReference type="InterPro" id="IPR011989">
    <property type="entry name" value="ARM-like"/>
</dbReference>
<dbReference type="InterPro" id="IPR016024">
    <property type="entry name" value="ARM-type_fold"/>
</dbReference>
<dbReference type="InterPro" id="IPR027517">
    <property type="entry name" value="Deoxyhypusine_hydroxylase"/>
</dbReference>
<dbReference type="InterPro" id="IPR021133">
    <property type="entry name" value="HEAT_type_2"/>
</dbReference>
<dbReference type="InterPro" id="IPR004155">
    <property type="entry name" value="PBS_lyase_HEAT"/>
</dbReference>
<dbReference type="PANTHER" id="PTHR12697:SF5">
    <property type="entry name" value="DEOXYHYPUSINE HYDROXYLASE"/>
    <property type="match status" value="1"/>
</dbReference>
<dbReference type="PANTHER" id="PTHR12697">
    <property type="entry name" value="PBS LYASE HEAT-LIKE PROTEIN"/>
    <property type="match status" value="1"/>
</dbReference>
<dbReference type="Pfam" id="PF13646">
    <property type="entry name" value="HEAT_2"/>
    <property type="match status" value="2"/>
</dbReference>
<dbReference type="SMART" id="SM00567">
    <property type="entry name" value="EZ_HEAT"/>
    <property type="match status" value="5"/>
</dbReference>
<dbReference type="SUPFAM" id="SSF48371">
    <property type="entry name" value="ARM repeat"/>
    <property type="match status" value="1"/>
</dbReference>
<dbReference type="PROSITE" id="PS50077">
    <property type="entry name" value="HEAT_REPEAT"/>
    <property type="match status" value="1"/>
</dbReference>
<name>DOHH_KLULA</name>
<protein>
    <recommendedName>
        <fullName evidence="1">Deoxyhypusine hydroxylase</fullName>
        <shortName evidence="1">DOHH</shortName>
        <ecNumber evidence="1">1.14.99.29</ecNumber>
    </recommendedName>
    <alternativeName>
        <fullName evidence="1">Deoxyhypusine dioxygenase</fullName>
    </alternativeName>
    <alternativeName>
        <fullName evidence="1">Deoxyhypusine monooxygenase</fullName>
    </alternativeName>
</protein>
<accession>Q6CV81</accession>
<sequence length="322" mass="36359">MSTNFEKHFEVDVDNCSLEQLRDILVNNSGKAPLANRFRALFNLKGHAEEFASKPEDALKATQYLAEAFGDESELLKHEVAYVLGQTKNMAGAPLLRDVLADDKQQCMVRHEAAEALGALNDVDSLDILEKYFKEDPLLEIRQTCELAIDRIKWETSEEGRREALQESLYSSIDPAPPFSLEKDYKIQELKDILNDQNRPLFERYRAMFRLRDIGNDEACLALASGFDDPSALFKHEIAYVFGQICNPVVVPHLKEVLARPEEAPMVRHEAAEALGSIATDDVLPVLKEHLKDSDSVVRESAIVALDMYEYENSNDLEYAPV</sequence>
<organism>
    <name type="scientific">Kluyveromyces lactis (strain ATCC 8585 / CBS 2359 / DSM 70799 / NBRC 1267 / NRRL Y-1140 / WM37)</name>
    <name type="common">Yeast</name>
    <name type="synonym">Candida sphaerica</name>
    <dbReference type="NCBI Taxonomy" id="284590"/>
    <lineage>
        <taxon>Eukaryota</taxon>
        <taxon>Fungi</taxon>
        <taxon>Dikarya</taxon>
        <taxon>Ascomycota</taxon>
        <taxon>Saccharomycotina</taxon>
        <taxon>Saccharomycetes</taxon>
        <taxon>Saccharomycetales</taxon>
        <taxon>Saccharomycetaceae</taxon>
        <taxon>Kluyveromyces</taxon>
    </lineage>
</organism>